<reference key="1">
    <citation type="journal article" date="2008" name="PLoS Genet.">
        <title>Genomic islands in the pathogenic filamentous fungus Aspergillus fumigatus.</title>
        <authorList>
            <person name="Fedorova N.D."/>
            <person name="Khaldi N."/>
            <person name="Joardar V.S."/>
            <person name="Maiti R."/>
            <person name="Amedeo P."/>
            <person name="Anderson M.J."/>
            <person name="Crabtree J."/>
            <person name="Silva J.C."/>
            <person name="Badger J.H."/>
            <person name="Albarraq A."/>
            <person name="Angiuoli S."/>
            <person name="Bussey H."/>
            <person name="Bowyer P."/>
            <person name="Cotty P.J."/>
            <person name="Dyer P.S."/>
            <person name="Egan A."/>
            <person name="Galens K."/>
            <person name="Fraser-Liggett C.M."/>
            <person name="Haas B.J."/>
            <person name="Inman J.M."/>
            <person name="Kent R."/>
            <person name="Lemieux S."/>
            <person name="Malavazi I."/>
            <person name="Orvis J."/>
            <person name="Roemer T."/>
            <person name="Ronning C.M."/>
            <person name="Sundaram J.P."/>
            <person name="Sutton G."/>
            <person name="Turner G."/>
            <person name="Venter J.C."/>
            <person name="White O.R."/>
            <person name="Whitty B.R."/>
            <person name="Youngman P."/>
            <person name="Wolfe K.H."/>
            <person name="Goldman G.H."/>
            <person name="Wortman J.R."/>
            <person name="Jiang B."/>
            <person name="Denning D.W."/>
            <person name="Nierman W.C."/>
        </authorList>
    </citation>
    <scope>NUCLEOTIDE SEQUENCE [LARGE SCALE GENOMIC DNA]</scope>
    <source>
        <strain>ATCC 1007 / CBS 513.65 / DSM 816 / NCTC 3887 / NRRL 1 / QM 1276 / 107</strain>
    </source>
</reference>
<reference key="2">
    <citation type="journal article" date="2004" name="Int. J. Epidemiol.">
        <title>Clinical trial of patulin in the common cold. 1944.</title>
        <authorList>
            <consortium name="Patulin Clinical Trials Committee, Medical Research Council"/>
        </authorList>
    </citation>
    <scope>BIOTECHNOLOGY</scope>
</reference>
<reference key="3">
    <citation type="journal article" date="2009" name="Microbiology">
        <title>Molecular cloning and functional characterization of two CYP619 cytochrome P450s involved in biosynthesis of patulin in Aspergillus clavatus.</title>
        <authorList>
            <person name="Artigot M.P."/>
            <person name="Loiseau N."/>
            <person name="Laffitte J."/>
            <person name="Mas-Reguieg L."/>
            <person name="Tadrist S."/>
            <person name="Oswald I.P."/>
            <person name="Puel O."/>
        </authorList>
    </citation>
    <scope>FUNCTION</scope>
</reference>
<reference key="4">
    <citation type="journal article" date="2012" name="Food Chem. Toxicol.">
        <title>DNA damage in organs of mice treated acutely with patulin, a known mycotoxin.</title>
        <authorList>
            <person name="de Melo F.T."/>
            <person name="de Oliveira I.M."/>
            <person name="Greggio S."/>
            <person name="Dacosta J.C."/>
            <person name="Guecheva T.N."/>
            <person name="Saffi J."/>
            <person name="Henriques J.A."/>
            <person name="Rosa R.M."/>
        </authorList>
    </citation>
    <scope>BIOTECHNOLOGY</scope>
</reference>
<reference key="5">
    <citation type="journal article" date="2014" name="Int. J. Food Microbiol.">
        <title>The gene PatG involved in the biosynthesis pathway of patulin, a food-borne mycotoxin, encodes a 6-methylsalicylic acid decarboxylase.</title>
        <authorList>
            <person name="Snini S.P."/>
            <person name="Tadrist S."/>
            <person name="Laffitte J."/>
            <person name="Jamin E.L."/>
            <person name="Oswald I.P."/>
            <person name="Puel O."/>
        </authorList>
    </citation>
    <scope>FUNCTION</scope>
</reference>
<reference key="6">
    <citation type="journal article" date="2016" name="Tumor Biol.">
        <title>The potential effect of patulin on mice bearing melanoma cells: an anti-tumour or carcinogenic effect?</title>
        <authorList>
            <person name="Boussabbeh M."/>
            <person name="Ben Salem I."/>
            <person name="Rjiba-Touati K."/>
            <person name="Bouyahya C."/>
            <person name="Neffati F."/>
            <person name="Najjar M.F."/>
            <person name="Bacha H."/>
            <person name="Abid-Essefi S."/>
        </authorList>
    </citation>
    <scope>BIOTECHNOLOGY</scope>
</reference>
<accession>A1CFK8</accession>
<evidence type="ECO:0000250" key="1">
    <source>
        <dbReference type="UniProtKB" id="A0A075TRL0"/>
    </source>
</evidence>
<evidence type="ECO:0000255" key="2"/>
<evidence type="ECO:0000255" key="3">
    <source>
        <dbReference type="PROSITE-ProRule" id="PRU00498"/>
    </source>
</evidence>
<evidence type="ECO:0000269" key="4">
    <source>
    </source>
</evidence>
<evidence type="ECO:0000269" key="5">
    <source>
    </source>
</evidence>
<evidence type="ECO:0000269" key="6">
    <source>
    </source>
</evidence>
<evidence type="ECO:0000303" key="7">
    <source>
    </source>
</evidence>
<evidence type="ECO:0000305" key="8"/>
<evidence type="ECO:0000305" key="9">
    <source>
    </source>
</evidence>
<proteinExistence type="evidence at protein level"/>
<gene>
    <name evidence="7" type="primary">patA</name>
    <name type="ORF">ACLA_093560</name>
</gene>
<sequence>MSNVKTAMDTSNEESQLSYNASTSSSCAAGKEHATTPPITPIGSPTALGMGAFAIAFTTLSMSLMEWRGAAITNAYIGNCFFTAGLGLVLVAQWELVRGNSYGHTVFGGFGLFNLAFGAINAPAFGVADAFKDDPAALSNALGYFLLVWGVFVLFFTIAAMPMNLVYTAMLGTSQITYTLLAASYFAMADEKATAGVGLKKAAGAFGFVSGLLAWYVVAHLMCQDALFFSFPLGDTSRLYARLRRNR</sequence>
<organism>
    <name type="scientific">Aspergillus clavatus (strain ATCC 1007 / CBS 513.65 / DSM 816 / NCTC 3887 / NRRL 1 / QM 1276 / 107)</name>
    <dbReference type="NCBI Taxonomy" id="344612"/>
    <lineage>
        <taxon>Eukaryota</taxon>
        <taxon>Fungi</taxon>
        <taxon>Dikarya</taxon>
        <taxon>Ascomycota</taxon>
        <taxon>Pezizomycotina</taxon>
        <taxon>Eurotiomycetes</taxon>
        <taxon>Eurotiomycetidae</taxon>
        <taxon>Eurotiales</taxon>
        <taxon>Aspergillaceae</taxon>
        <taxon>Aspergillus</taxon>
        <taxon>Aspergillus subgen. Fumigati</taxon>
    </lineage>
</organism>
<dbReference type="EMBL" id="DS027052">
    <property type="protein sequence ID" value="EAW11657.1"/>
    <property type="molecule type" value="Genomic_DNA"/>
</dbReference>
<dbReference type="RefSeq" id="XP_001273083.1">
    <property type="nucleotide sequence ID" value="XM_001273082.1"/>
</dbReference>
<dbReference type="SMR" id="A1CFK8"/>
<dbReference type="STRING" id="344612.A1CFK8"/>
<dbReference type="GlyCosmos" id="A1CFK8">
    <property type="glycosylation" value="1 site, No reported glycans"/>
</dbReference>
<dbReference type="EnsemblFungi" id="EAW11657">
    <property type="protein sequence ID" value="EAW11657"/>
    <property type="gene ID" value="ACLA_093560"/>
</dbReference>
<dbReference type="GeneID" id="4704863"/>
<dbReference type="KEGG" id="act:ACLA_093560"/>
<dbReference type="VEuPathDB" id="FungiDB:ACLA_093560"/>
<dbReference type="eggNOG" id="ENOG502SI7M">
    <property type="taxonomic scope" value="Eukaryota"/>
</dbReference>
<dbReference type="HOGENOM" id="CLU_051062_2_1_1"/>
<dbReference type="OMA" id="VANLMCQ"/>
<dbReference type="OrthoDB" id="3648309at2759"/>
<dbReference type="UniPathway" id="UPA00918"/>
<dbReference type="Proteomes" id="UP000006701">
    <property type="component" value="Unassembled WGS sequence"/>
</dbReference>
<dbReference type="GO" id="GO:0005789">
    <property type="term" value="C:endoplasmic reticulum membrane"/>
    <property type="evidence" value="ECO:0000250"/>
    <property type="project" value="GO_Central"/>
</dbReference>
<dbReference type="GO" id="GO:0005886">
    <property type="term" value="C:plasma membrane"/>
    <property type="evidence" value="ECO:0007669"/>
    <property type="project" value="TreeGrafter"/>
</dbReference>
<dbReference type="GO" id="GO:0015123">
    <property type="term" value="F:acetate transmembrane transporter activity"/>
    <property type="evidence" value="ECO:0007669"/>
    <property type="project" value="TreeGrafter"/>
</dbReference>
<dbReference type="GO" id="GO:0006811">
    <property type="term" value="P:monoatomic ion transport"/>
    <property type="evidence" value="ECO:0007669"/>
    <property type="project" value="UniProtKB-KW"/>
</dbReference>
<dbReference type="GO" id="GO:0140723">
    <property type="term" value="P:patulin biosynthetic process"/>
    <property type="evidence" value="ECO:0000250"/>
    <property type="project" value="GO_Central"/>
</dbReference>
<dbReference type="InterPro" id="IPR051633">
    <property type="entry name" value="AceTr"/>
</dbReference>
<dbReference type="InterPro" id="IPR000791">
    <property type="entry name" value="Gpr1/Fun34/SatP-like"/>
</dbReference>
<dbReference type="PANTHER" id="PTHR31123">
    <property type="entry name" value="ACCUMULATION OF DYADS PROTEIN 2-RELATED"/>
    <property type="match status" value="1"/>
</dbReference>
<dbReference type="PANTHER" id="PTHR31123:SF7">
    <property type="entry name" value="MARVEL DOMAIN-CONTAINING PROTEIN"/>
    <property type="match status" value="1"/>
</dbReference>
<dbReference type="Pfam" id="PF01184">
    <property type="entry name" value="Gpr1_Fun34_YaaH"/>
    <property type="match status" value="1"/>
</dbReference>
<keyword id="KW-0256">Endoplasmic reticulum</keyword>
<keyword id="KW-0325">Glycoprotein</keyword>
<keyword id="KW-0406">Ion transport</keyword>
<keyword id="KW-0472">Membrane</keyword>
<keyword id="KW-1185">Reference proteome</keyword>
<keyword id="KW-0812">Transmembrane</keyword>
<keyword id="KW-1133">Transmembrane helix</keyword>
<keyword id="KW-0813">Transport</keyword>
<protein>
    <recommendedName>
        <fullName evidence="7">Acetate transporter protein patA</fullName>
    </recommendedName>
    <alternativeName>
        <fullName evidence="7">Patulin synthesis protein A</fullName>
    </alternativeName>
</protein>
<name>PATA_ASPCL</name>
<feature type="chain" id="PRO_0000437112" description="Acetate transporter protein patA">
    <location>
        <begin position="1"/>
        <end position="247"/>
    </location>
</feature>
<feature type="transmembrane region" description="Helical" evidence="2">
    <location>
        <begin position="37"/>
        <end position="57"/>
    </location>
</feature>
<feature type="transmembrane region" description="Helical" evidence="2">
    <location>
        <begin position="71"/>
        <end position="91"/>
    </location>
</feature>
<feature type="transmembrane region" description="Helical" evidence="2">
    <location>
        <begin position="106"/>
        <end position="126"/>
    </location>
</feature>
<feature type="transmembrane region" description="Helical" evidence="2">
    <location>
        <begin position="141"/>
        <end position="161"/>
    </location>
</feature>
<feature type="transmembrane region" description="Helical" evidence="2">
    <location>
        <begin position="169"/>
        <end position="189"/>
    </location>
</feature>
<feature type="transmembrane region" description="Helical" evidence="2">
    <location>
        <begin position="202"/>
        <end position="222"/>
    </location>
</feature>
<feature type="glycosylation site" description="N-linked (GlcNAc...) asparagine" evidence="3">
    <location>
        <position position="20"/>
    </location>
</feature>
<comment type="function">
    <text evidence="9">Acetate transporter protein; part of the gene cluster that mediates the biosynthesis of patulin, an acetate-derived tetraketide mycotoxin produced by several fungal species that shows antimicrobial properties against several bacteria (PubMed:19383676). May be involved in the uptake of acetate, a substrate for the synthesis of 6-methylsalicylic acid by the polyketide synthase patK (PubMed:19383676).</text>
</comment>
<comment type="pathway">
    <text evidence="9">Mycotoxin biosynthesis; patulin biosynthesis.</text>
</comment>
<comment type="subcellular location">
    <subcellularLocation>
        <location evidence="1">Endoplasmic reticulum membrane</location>
        <topology evidence="1">Multi-pass membrane protein</topology>
    </subcellularLocation>
</comment>
<comment type="biotechnology">
    <text evidence="4 5 6">Patulin was originally used as an antibiotic and specifically trialed to be used against the common cold, but it is no longer used for that purpose since it has been shown to induce immunological, neurological and gastrointestinal effects (PubMed:15082620). Genotoxic effects of patulin with dose-dependent increase in DNA strand breaks in brain, liver and kidneys have been detected in mice (PubMed:22222931). However, more recently, it has been proposed that patulin might also have anti-tumor properties (PubMed:26619846).</text>
</comment>
<comment type="similarity">
    <text evidence="8">Belongs to the acetate uptake transporter (AceTr) (TC 2.A.96) family.</text>
</comment>